<keyword id="KW-0997">Cell inner membrane</keyword>
<keyword id="KW-1003">Cell membrane</keyword>
<keyword id="KW-0444">Lipid biosynthesis</keyword>
<keyword id="KW-0443">Lipid metabolism</keyword>
<keyword id="KW-0472">Membrane</keyword>
<keyword id="KW-0594">Phospholipid biosynthesis</keyword>
<keyword id="KW-1208">Phospholipid metabolism</keyword>
<keyword id="KW-1185">Reference proteome</keyword>
<keyword id="KW-0808">Transferase</keyword>
<keyword id="KW-0812">Transmembrane</keyword>
<keyword id="KW-1133">Transmembrane helix</keyword>
<comment type="function">
    <text evidence="1">Catalyzes the transfer of an acyl group from acyl-phosphate (acyl-PO(4)) to glycerol-3-phosphate (G3P) to form lysophosphatidic acid (LPA). This enzyme utilizes acyl-phosphate as fatty acyl donor, but not acyl-CoA or acyl-ACP.</text>
</comment>
<comment type="catalytic activity">
    <reaction evidence="1">
        <text>an acyl phosphate + sn-glycerol 3-phosphate = a 1-acyl-sn-glycero-3-phosphate + phosphate</text>
        <dbReference type="Rhea" id="RHEA:34075"/>
        <dbReference type="ChEBI" id="CHEBI:43474"/>
        <dbReference type="ChEBI" id="CHEBI:57597"/>
        <dbReference type="ChEBI" id="CHEBI:57970"/>
        <dbReference type="ChEBI" id="CHEBI:59918"/>
        <dbReference type="EC" id="2.3.1.275"/>
    </reaction>
</comment>
<comment type="pathway">
    <text evidence="1">Lipid metabolism; phospholipid metabolism.</text>
</comment>
<comment type="subunit">
    <text evidence="1">Probably interacts with PlsX.</text>
</comment>
<comment type="subcellular location">
    <subcellularLocation>
        <location evidence="1">Cell inner membrane</location>
        <topology evidence="1">Multi-pass membrane protein</topology>
    </subcellularLocation>
</comment>
<comment type="similarity">
    <text evidence="1">Belongs to the PlsY family.</text>
</comment>
<protein>
    <recommendedName>
        <fullName evidence="1">Glycerol-3-phosphate acyltransferase</fullName>
    </recommendedName>
    <alternativeName>
        <fullName evidence="1">Acyl-PO4 G3P acyltransferase</fullName>
    </alternativeName>
    <alternativeName>
        <fullName evidence="1">Acyl-phosphate--glycerol-3-phosphate acyltransferase</fullName>
    </alternativeName>
    <alternativeName>
        <fullName evidence="1">G3P acyltransferase</fullName>
        <shortName evidence="1">GPAT</shortName>
        <ecNumber evidence="1">2.3.1.275</ecNumber>
    </alternativeName>
    <alternativeName>
        <fullName evidence="1">Lysophosphatidic acid synthase</fullName>
        <shortName evidence="1">LPA synthase</shortName>
    </alternativeName>
</protein>
<dbReference type="EC" id="2.3.1.275" evidence="1"/>
<dbReference type="EMBL" id="CP000285">
    <property type="protein sequence ID" value="ABE58329.1"/>
    <property type="molecule type" value="Genomic_DNA"/>
</dbReference>
<dbReference type="RefSeq" id="WP_011506275.1">
    <property type="nucleotide sequence ID" value="NC_007963.1"/>
</dbReference>
<dbReference type="SMR" id="Q1QYX9"/>
<dbReference type="STRING" id="290398.Csal_0972"/>
<dbReference type="GeneID" id="95333727"/>
<dbReference type="KEGG" id="csa:Csal_0972"/>
<dbReference type="eggNOG" id="COG0344">
    <property type="taxonomic scope" value="Bacteria"/>
</dbReference>
<dbReference type="HOGENOM" id="CLU_081254_0_0_6"/>
<dbReference type="UniPathway" id="UPA00085"/>
<dbReference type="Proteomes" id="UP000000239">
    <property type="component" value="Chromosome"/>
</dbReference>
<dbReference type="GO" id="GO:0005886">
    <property type="term" value="C:plasma membrane"/>
    <property type="evidence" value="ECO:0007669"/>
    <property type="project" value="UniProtKB-SubCell"/>
</dbReference>
<dbReference type="GO" id="GO:0043772">
    <property type="term" value="F:acyl-phosphate glycerol-3-phosphate acyltransferase activity"/>
    <property type="evidence" value="ECO:0007669"/>
    <property type="project" value="UniProtKB-UniRule"/>
</dbReference>
<dbReference type="GO" id="GO:0008654">
    <property type="term" value="P:phospholipid biosynthetic process"/>
    <property type="evidence" value="ECO:0007669"/>
    <property type="project" value="UniProtKB-UniRule"/>
</dbReference>
<dbReference type="HAMAP" id="MF_01043">
    <property type="entry name" value="PlsY"/>
    <property type="match status" value="1"/>
</dbReference>
<dbReference type="InterPro" id="IPR003811">
    <property type="entry name" value="G3P_acylTferase_PlsY"/>
</dbReference>
<dbReference type="PANTHER" id="PTHR30309:SF0">
    <property type="entry name" value="GLYCEROL-3-PHOSPHATE ACYLTRANSFERASE-RELATED"/>
    <property type="match status" value="1"/>
</dbReference>
<dbReference type="PANTHER" id="PTHR30309">
    <property type="entry name" value="INNER MEMBRANE PROTEIN YGIH"/>
    <property type="match status" value="1"/>
</dbReference>
<dbReference type="Pfam" id="PF02660">
    <property type="entry name" value="G3P_acyltransf"/>
    <property type="match status" value="1"/>
</dbReference>
<dbReference type="SMART" id="SM01207">
    <property type="entry name" value="G3P_acyltransf"/>
    <property type="match status" value="1"/>
</dbReference>
<proteinExistence type="inferred from homology"/>
<reference key="1">
    <citation type="journal article" date="2011" name="Stand. Genomic Sci.">
        <title>Complete genome sequence of the halophilic and highly halotolerant Chromohalobacter salexigens type strain (1H11(T)).</title>
        <authorList>
            <person name="Copeland A."/>
            <person name="O'Connor K."/>
            <person name="Lucas S."/>
            <person name="Lapidus A."/>
            <person name="Berry K.W."/>
            <person name="Detter J.C."/>
            <person name="Del Rio T.G."/>
            <person name="Hammon N."/>
            <person name="Dalin E."/>
            <person name="Tice H."/>
            <person name="Pitluck S."/>
            <person name="Bruce D."/>
            <person name="Goodwin L."/>
            <person name="Han C."/>
            <person name="Tapia R."/>
            <person name="Saunders E."/>
            <person name="Schmutz J."/>
            <person name="Brettin T."/>
            <person name="Larimer F."/>
            <person name="Land M."/>
            <person name="Hauser L."/>
            <person name="Vargas C."/>
            <person name="Nieto J.J."/>
            <person name="Kyrpides N.C."/>
            <person name="Ivanova N."/>
            <person name="Goker M."/>
            <person name="Klenk H.P."/>
            <person name="Csonka L.N."/>
            <person name="Woyke T."/>
        </authorList>
    </citation>
    <scope>NUCLEOTIDE SEQUENCE [LARGE SCALE GENOMIC DNA]</scope>
    <source>
        <strain>ATCC BAA-138 / DSM 3043 / CIP 106854 / NCIMB 13768 / 1H11</strain>
    </source>
</reference>
<sequence>MSSPLPMTALVLAGYLSGSLLGAVWVCRALGRRDPRHAGSRNPGFSNVLRLHGVVPAALTLGVDAAKAMPVLWVAQREALPIWAQGAVGLSVLVGHSYPLWHRGRGGKAVASAFGVLLMIATPVAWVCALCWALLAWRSRTAAVASLAAALLAPLASYWLAREATLVVSVFSALVLVRHAWNIRRLGQGGEPGLKREERIKPPEE</sequence>
<feature type="chain" id="PRO_0000250295" description="Glycerol-3-phosphate acyltransferase">
    <location>
        <begin position="1"/>
        <end position="205"/>
    </location>
</feature>
<feature type="transmembrane region" description="Helical" evidence="1">
    <location>
        <begin position="7"/>
        <end position="27"/>
    </location>
</feature>
<feature type="transmembrane region" description="Helical" evidence="1">
    <location>
        <begin position="54"/>
        <end position="74"/>
    </location>
</feature>
<feature type="transmembrane region" description="Helical" evidence="1">
    <location>
        <begin position="80"/>
        <end position="100"/>
    </location>
</feature>
<feature type="transmembrane region" description="Helical" evidence="1">
    <location>
        <begin position="116"/>
        <end position="136"/>
    </location>
</feature>
<feature type="transmembrane region" description="Helical" evidence="1">
    <location>
        <begin position="141"/>
        <end position="161"/>
    </location>
</feature>
<feature type="transmembrane region" description="Helical" evidence="1">
    <location>
        <begin position="163"/>
        <end position="183"/>
    </location>
</feature>
<organism>
    <name type="scientific">Chromohalobacter salexigens (strain ATCC BAA-138 / DSM 3043 / CIP 106854 / NCIMB 13768 / 1H11)</name>
    <dbReference type="NCBI Taxonomy" id="290398"/>
    <lineage>
        <taxon>Bacteria</taxon>
        <taxon>Pseudomonadati</taxon>
        <taxon>Pseudomonadota</taxon>
        <taxon>Gammaproteobacteria</taxon>
        <taxon>Oceanospirillales</taxon>
        <taxon>Halomonadaceae</taxon>
        <taxon>Chromohalobacter</taxon>
    </lineage>
</organism>
<name>PLSY_CHRSD</name>
<evidence type="ECO:0000255" key="1">
    <source>
        <dbReference type="HAMAP-Rule" id="MF_01043"/>
    </source>
</evidence>
<accession>Q1QYX9</accession>
<gene>
    <name evidence="1" type="primary">plsY</name>
    <name type="ordered locus">Csal_0972</name>
</gene>